<reference key="1">
    <citation type="journal article" date="2004" name="Nat. Genet.">
        <title>Complete sequencing and characterization of 21,243 full-length human cDNAs.</title>
        <authorList>
            <person name="Ota T."/>
            <person name="Suzuki Y."/>
            <person name="Nishikawa T."/>
            <person name="Otsuki T."/>
            <person name="Sugiyama T."/>
            <person name="Irie R."/>
            <person name="Wakamatsu A."/>
            <person name="Hayashi K."/>
            <person name="Sato H."/>
            <person name="Nagai K."/>
            <person name="Kimura K."/>
            <person name="Makita H."/>
            <person name="Sekine M."/>
            <person name="Obayashi M."/>
            <person name="Nishi T."/>
            <person name="Shibahara T."/>
            <person name="Tanaka T."/>
            <person name="Ishii S."/>
            <person name="Yamamoto J."/>
            <person name="Saito K."/>
            <person name="Kawai Y."/>
            <person name="Isono Y."/>
            <person name="Nakamura Y."/>
            <person name="Nagahari K."/>
            <person name="Murakami K."/>
            <person name="Yasuda T."/>
            <person name="Iwayanagi T."/>
            <person name="Wagatsuma M."/>
            <person name="Shiratori A."/>
            <person name="Sudo H."/>
            <person name="Hosoiri T."/>
            <person name="Kaku Y."/>
            <person name="Kodaira H."/>
            <person name="Kondo H."/>
            <person name="Sugawara M."/>
            <person name="Takahashi M."/>
            <person name="Kanda K."/>
            <person name="Yokoi T."/>
            <person name="Furuya T."/>
            <person name="Kikkawa E."/>
            <person name="Omura Y."/>
            <person name="Abe K."/>
            <person name="Kamihara K."/>
            <person name="Katsuta N."/>
            <person name="Sato K."/>
            <person name="Tanikawa M."/>
            <person name="Yamazaki M."/>
            <person name="Ninomiya K."/>
            <person name="Ishibashi T."/>
            <person name="Yamashita H."/>
            <person name="Murakawa K."/>
            <person name="Fujimori K."/>
            <person name="Tanai H."/>
            <person name="Kimata M."/>
            <person name="Watanabe M."/>
            <person name="Hiraoka S."/>
            <person name="Chiba Y."/>
            <person name="Ishida S."/>
            <person name="Ono Y."/>
            <person name="Takiguchi S."/>
            <person name="Watanabe S."/>
            <person name="Yosida M."/>
            <person name="Hotuta T."/>
            <person name="Kusano J."/>
            <person name="Kanehori K."/>
            <person name="Takahashi-Fujii A."/>
            <person name="Hara H."/>
            <person name="Tanase T.-O."/>
            <person name="Nomura Y."/>
            <person name="Togiya S."/>
            <person name="Komai F."/>
            <person name="Hara R."/>
            <person name="Takeuchi K."/>
            <person name="Arita M."/>
            <person name="Imose N."/>
            <person name="Musashino K."/>
            <person name="Yuuki H."/>
            <person name="Oshima A."/>
            <person name="Sasaki N."/>
            <person name="Aotsuka S."/>
            <person name="Yoshikawa Y."/>
            <person name="Matsunawa H."/>
            <person name="Ichihara T."/>
            <person name="Shiohata N."/>
            <person name="Sano S."/>
            <person name="Moriya S."/>
            <person name="Momiyama H."/>
            <person name="Satoh N."/>
            <person name="Takami S."/>
            <person name="Terashima Y."/>
            <person name="Suzuki O."/>
            <person name="Nakagawa S."/>
            <person name="Senoh A."/>
            <person name="Mizoguchi H."/>
            <person name="Goto Y."/>
            <person name="Shimizu F."/>
            <person name="Wakebe H."/>
            <person name="Hishigaki H."/>
            <person name="Watanabe T."/>
            <person name="Sugiyama A."/>
            <person name="Takemoto M."/>
            <person name="Kawakami B."/>
            <person name="Yamazaki M."/>
            <person name="Watanabe K."/>
            <person name="Kumagai A."/>
            <person name="Itakura S."/>
            <person name="Fukuzumi Y."/>
            <person name="Fujimori Y."/>
            <person name="Komiyama M."/>
            <person name="Tashiro H."/>
            <person name="Tanigami A."/>
            <person name="Fujiwara T."/>
            <person name="Ono T."/>
            <person name="Yamada K."/>
            <person name="Fujii Y."/>
            <person name="Ozaki K."/>
            <person name="Hirao M."/>
            <person name="Ohmori Y."/>
            <person name="Kawabata A."/>
            <person name="Hikiji T."/>
            <person name="Kobatake N."/>
            <person name="Inagaki H."/>
            <person name="Ikema Y."/>
            <person name="Okamoto S."/>
            <person name="Okitani R."/>
            <person name="Kawakami T."/>
            <person name="Noguchi S."/>
            <person name="Itoh T."/>
            <person name="Shigeta K."/>
            <person name="Senba T."/>
            <person name="Matsumura K."/>
            <person name="Nakajima Y."/>
            <person name="Mizuno T."/>
            <person name="Morinaga M."/>
            <person name="Sasaki M."/>
            <person name="Togashi T."/>
            <person name="Oyama M."/>
            <person name="Hata H."/>
            <person name="Watanabe M."/>
            <person name="Komatsu T."/>
            <person name="Mizushima-Sugano J."/>
            <person name="Satoh T."/>
            <person name="Shirai Y."/>
            <person name="Takahashi Y."/>
            <person name="Nakagawa K."/>
            <person name="Okumura K."/>
            <person name="Nagase T."/>
            <person name="Nomura N."/>
            <person name="Kikuchi H."/>
            <person name="Masuho Y."/>
            <person name="Yamashita R."/>
            <person name="Nakai K."/>
            <person name="Yada T."/>
            <person name="Nakamura Y."/>
            <person name="Ohara O."/>
            <person name="Isogai T."/>
            <person name="Sugano S."/>
        </authorList>
    </citation>
    <scope>NUCLEOTIDE SEQUENCE [LARGE SCALE MRNA] (ISOFORMS 1 AND 2)</scope>
    <scope>VARIANT ILE-252</scope>
    <source>
        <tissue>Testis</tissue>
    </source>
</reference>
<reference key="2">
    <citation type="journal article" date="2004" name="Nature">
        <title>The DNA sequence and biology of human chromosome 19.</title>
        <authorList>
            <person name="Grimwood J."/>
            <person name="Gordon L.A."/>
            <person name="Olsen A.S."/>
            <person name="Terry A."/>
            <person name="Schmutz J."/>
            <person name="Lamerdin J.E."/>
            <person name="Hellsten U."/>
            <person name="Goodstein D."/>
            <person name="Couronne O."/>
            <person name="Tran-Gyamfi M."/>
            <person name="Aerts A."/>
            <person name="Altherr M."/>
            <person name="Ashworth L."/>
            <person name="Bajorek E."/>
            <person name="Black S."/>
            <person name="Branscomb E."/>
            <person name="Caenepeel S."/>
            <person name="Carrano A.V."/>
            <person name="Caoile C."/>
            <person name="Chan Y.M."/>
            <person name="Christensen M."/>
            <person name="Cleland C.A."/>
            <person name="Copeland A."/>
            <person name="Dalin E."/>
            <person name="Dehal P."/>
            <person name="Denys M."/>
            <person name="Detter J.C."/>
            <person name="Escobar J."/>
            <person name="Flowers D."/>
            <person name="Fotopulos D."/>
            <person name="Garcia C."/>
            <person name="Georgescu A.M."/>
            <person name="Glavina T."/>
            <person name="Gomez M."/>
            <person name="Gonzales E."/>
            <person name="Groza M."/>
            <person name="Hammon N."/>
            <person name="Hawkins T."/>
            <person name="Haydu L."/>
            <person name="Ho I."/>
            <person name="Huang W."/>
            <person name="Israni S."/>
            <person name="Jett J."/>
            <person name="Kadner K."/>
            <person name="Kimball H."/>
            <person name="Kobayashi A."/>
            <person name="Larionov V."/>
            <person name="Leem S.-H."/>
            <person name="Lopez F."/>
            <person name="Lou Y."/>
            <person name="Lowry S."/>
            <person name="Malfatti S."/>
            <person name="Martinez D."/>
            <person name="McCready P.M."/>
            <person name="Medina C."/>
            <person name="Morgan J."/>
            <person name="Nelson K."/>
            <person name="Nolan M."/>
            <person name="Ovcharenko I."/>
            <person name="Pitluck S."/>
            <person name="Pollard M."/>
            <person name="Popkie A.P."/>
            <person name="Predki P."/>
            <person name="Quan G."/>
            <person name="Ramirez L."/>
            <person name="Rash S."/>
            <person name="Retterer J."/>
            <person name="Rodriguez A."/>
            <person name="Rogers S."/>
            <person name="Salamov A."/>
            <person name="Salazar A."/>
            <person name="She X."/>
            <person name="Smith D."/>
            <person name="Slezak T."/>
            <person name="Solovyev V."/>
            <person name="Thayer N."/>
            <person name="Tice H."/>
            <person name="Tsai M."/>
            <person name="Ustaszewska A."/>
            <person name="Vo N."/>
            <person name="Wagner M."/>
            <person name="Wheeler J."/>
            <person name="Wu K."/>
            <person name="Xie G."/>
            <person name="Yang J."/>
            <person name="Dubchak I."/>
            <person name="Furey T.S."/>
            <person name="DeJong P."/>
            <person name="Dickson M."/>
            <person name="Gordon D."/>
            <person name="Eichler E.E."/>
            <person name="Pennacchio L.A."/>
            <person name="Richardson P."/>
            <person name="Stubbs L."/>
            <person name="Rokhsar D.S."/>
            <person name="Myers R.M."/>
            <person name="Rubin E.M."/>
            <person name="Lucas S.M."/>
        </authorList>
    </citation>
    <scope>NUCLEOTIDE SEQUENCE [LARGE SCALE GENOMIC DNA]</scope>
</reference>
<reference key="3">
    <citation type="submission" date="2005-07" db="EMBL/GenBank/DDBJ databases">
        <authorList>
            <person name="Mural R.J."/>
            <person name="Istrail S."/>
            <person name="Sutton G.G."/>
            <person name="Florea L."/>
            <person name="Halpern A.L."/>
            <person name="Mobarry C.M."/>
            <person name="Lippert R."/>
            <person name="Walenz B."/>
            <person name="Shatkay H."/>
            <person name="Dew I."/>
            <person name="Miller J.R."/>
            <person name="Flanigan M.J."/>
            <person name="Edwards N.J."/>
            <person name="Bolanos R."/>
            <person name="Fasulo D."/>
            <person name="Halldorsson B.V."/>
            <person name="Hannenhalli S."/>
            <person name="Turner R."/>
            <person name="Yooseph S."/>
            <person name="Lu F."/>
            <person name="Nusskern D.R."/>
            <person name="Shue B.C."/>
            <person name="Zheng X.H."/>
            <person name="Zhong F."/>
            <person name="Delcher A.L."/>
            <person name="Huson D.H."/>
            <person name="Kravitz S.A."/>
            <person name="Mouchard L."/>
            <person name="Reinert K."/>
            <person name="Remington K.A."/>
            <person name="Clark A.G."/>
            <person name="Waterman M.S."/>
            <person name="Eichler E.E."/>
            <person name="Adams M.D."/>
            <person name="Hunkapiller M.W."/>
            <person name="Myers E.W."/>
            <person name="Venter J.C."/>
        </authorList>
    </citation>
    <scope>NUCLEOTIDE SEQUENCE [LARGE SCALE GENOMIC DNA]</scope>
</reference>
<reference key="4">
    <citation type="journal article" date="2004" name="Genome Res.">
        <title>The status, quality, and expansion of the NIH full-length cDNA project: the Mammalian Gene Collection (MGC).</title>
        <authorList>
            <consortium name="The MGC Project Team"/>
        </authorList>
    </citation>
    <scope>NUCLEOTIDE SEQUENCE [LARGE SCALE MRNA] (ISOFORM 2)</scope>
    <source>
        <tissue>Testis</tissue>
    </source>
</reference>
<reference key="5">
    <citation type="journal article" date="2007" name="BMC Genomics">
        <title>The full-ORF clone resource of the German cDNA consortium.</title>
        <authorList>
            <person name="Bechtel S."/>
            <person name="Rosenfelder H."/>
            <person name="Duda A."/>
            <person name="Schmidt C.P."/>
            <person name="Ernst U."/>
            <person name="Wellenreuther R."/>
            <person name="Mehrle A."/>
            <person name="Schuster C."/>
            <person name="Bahr A."/>
            <person name="Bloecker H."/>
            <person name="Heubner D."/>
            <person name="Hoerlein A."/>
            <person name="Michel G."/>
            <person name="Wedler H."/>
            <person name="Koehrer K."/>
            <person name="Ottenwaelder B."/>
            <person name="Poustka A."/>
            <person name="Wiemann S."/>
            <person name="Schupp I."/>
        </authorList>
    </citation>
    <scope>NUCLEOTIDE SEQUENCE [LARGE SCALE MRNA] OF 108-705</scope>
    <scope>VARIANT ILE-252</scope>
    <source>
        <tissue>Amygdala</tissue>
    </source>
</reference>
<reference key="6">
    <citation type="journal article" date="2017" name="Nat. Struct. Mol. Biol.">
        <title>Site-specific mapping of the human SUMO proteome reveals co-modification with phosphorylation.</title>
        <authorList>
            <person name="Hendriks I.A."/>
            <person name="Lyon D."/>
            <person name="Young C."/>
            <person name="Jensen L.J."/>
            <person name="Vertegaal A.C."/>
            <person name="Nielsen M.L."/>
        </authorList>
    </citation>
    <scope>SUMOYLATION [LARGE SCALE ANALYSIS] AT LYS-173 AND LYS-221</scope>
    <scope>IDENTIFICATION BY MASS SPECTROMETRY [LARGE SCALE ANALYSIS]</scope>
</reference>
<protein>
    <recommendedName>
        <fullName>Zinc finger protein 611</fullName>
    </recommendedName>
</protein>
<organism>
    <name type="scientific">Homo sapiens</name>
    <name type="common">Human</name>
    <dbReference type="NCBI Taxonomy" id="9606"/>
    <lineage>
        <taxon>Eukaryota</taxon>
        <taxon>Metazoa</taxon>
        <taxon>Chordata</taxon>
        <taxon>Craniata</taxon>
        <taxon>Vertebrata</taxon>
        <taxon>Euteleostomi</taxon>
        <taxon>Mammalia</taxon>
        <taxon>Eutheria</taxon>
        <taxon>Euarchontoglires</taxon>
        <taxon>Primates</taxon>
        <taxon>Haplorrhini</taxon>
        <taxon>Catarrhini</taxon>
        <taxon>Hominidae</taxon>
        <taxon>Homo</taxon>
    </lineage>
</organism>
<sequence>MLREEAAQKRKGKEPGMALPQGRLTFRDVAIEFSLAEWKCLNPSQRALYREVMLENYRNLEAVDISSKCMMKEVLSTGQGNTEVIHTGTLQRHESHHIGDFCFQEIEKEIHDIEFQCQEDERNGLEAPMTKIKKLTGSTDQHDHRHAGNKPIKDQLGSSFYSHLPELHIFQIKGEIGNQLEKSTNDAPSVSTFQRISCRPQTQISNNYGNNPLNSSLLPQKQEVHMREKSFQCNKSGKAFNCSSLLRKHQIPHLGDKQYKCDVCGKLFNHEQYLACHDRCHTVEKPYKCKECGKTFSQESSLTCHRRLHTGVKRYNCNECGKIFGQNSALLIDKAIDTGENPYKCNECDKAFNQQSQLSHHRIHTGEKPYKCEECDKVFSRKSTIETHKRIHTGEKPYRCKVCDTAFTWHSQLARHRRIHTAKKTYKCNECGKTFSHKSSLVCHHRLHGGEKSYKCKVCDKAFVWSSQLAKHTRIDCGEKPYKCNECGKTFGQNSDLLIHKSIHTGEQPYKCDECEKVFSRKSSLETHKIGHTGEKPYKCKVCDKAFACHSYLAKHTRIHSGEKPYKCNECSKTFSHRSYLVCHHRVHSGEKPYKCNECSKTFSRRSSLHCHRRLHSGEKPYKCNECGNTFRHCSSLIYHRRLHTGEKSYKCTICDKAFVRNSLLSRHTRIHTAEKPYKCNECGKAFNQQSHLSRHHRIHTGEKP</sequence>
<gene>
    <name type="primary">ZNF611</name>
</gene>
<name>ZN611_HUMAN</name>
<comment type="function">
    <text>May be involved in transcriptional regulation.</text>
</comment>
<comment type="subcellular location">
    <subcellularLocation>
        <location evidence="7">Nucleus</location>
    </subcellularLocation>
</comment>
<comment type="alternative products">
    <event type="alternative splicing"/>
    <isoform>
        <id>Q8N823-1</id>
        <name>1</name>
        <sequence type="displayed"/>
    </isoform>
    <isoform>
        <id>Q8N823-2</id>
        <name>2</name>
        <sequence type="described" ref="VSP_038425"/>
    </isoform>
</comment>
<comment type="similarity">
    <text evidence="7">Belongs to the krueppel C2H2-type zinc-finger protein family.</text>
</comment>
<proteinExistence type="evidence at protein level"/>
<accession>Q8N823</accession>
<accession>B3KRD5</accession>
<accession>Q69YG9</accession>
<keyword id="KW-0025">Alternative splicing</keyword>
<keyword id="KW-0238">DNA-binding</keyword>
<keyword id="KW-1017">Isopeptide bond</keyword>
<keyword id="KW-0479">Metal-binding</keyword>
<keyword id="KW-0539">Nucleus</keyword>
<keyword id="KW-1267">Proteomics identification</keyword>
<keyword id="KW-1185">Reference proteome</keyword>
<keyword id="KW-0677">Repeat</keyword>
<keyword id="KW-0804">Transcription</keyword>
<keyword id="KW-0805">Transcription regulation</keyword>
<keyword id="KW-0832">Ubl conjugation</keyword>
<keyword id="KW-0862">Zinc</keyword>
<keyword id="KW-0863">Zinc-finger</keyword>
<evidence type="ECO:0000255" key="1">
    <source>
        <dbReference type="PROSITE-ProRule" id="PRU00042"/>
    </source>
</evidence>
<evidence type="ECO:0000255" key="2">
    <source>
        <dbReference type="PROSITE-ProRule" id="PRU00119"/>
    </source>
</evidence>
<evidence type="ECO:0000269" key="3">
    <source>
    </source>
</evidence>
<evidence type="ECO:0000269" key="4">
    <source>
    </source>
</evidence>
<evidence type="ECO:0000303" key="5">
    <source>
    </source>
</evidence>
<evidence type="ECO:0000303" key="6">
    <source>
    </source>
</evidence>
<evidence type="ECO:0000305" key="7"/>
<evidence type="ECO:0007744" key="8">
    <source>
    </source>
</evidence>
<dbReference type="EMBL" id="AK091389">
    <property type="protein sequence ID" value="BAG52347.1"/>
    <property type="molecule type" value="mRNA"/>
</dbReference>
<dbReference type="EMBL" id="AK097434">
    <property type="protein sequence ID" value="BAC05052.1"/>
    <property type="molecule type" value="mRNA"/>
</dbReference>
<dbReference type="EMBL" id="AC022150">
    <property type="status" value="NOT_ANNOTATED_CDS"/>
    <property type="molecule type" value="Genomic_DNA"/>
</dbReference>
<dbReference type="EMBL" id="CH471135">
    <property type="protein sequence ID" value="EAW72093.1"/>
    <property type="molecule type" value="Genomic_DNA"/>
</dbReference>
<dbReference type="EMBL" id="BC136343">
    <property type="protein sequence ID" value="AAI36344.1"/>
    <property type="molecule type" value="mRNA"/>
</dbReference>
<dbReference type="EMBL" id="AL834123">
    <property type="protein sequence ID" value="CAH10596.1"/>
    <property type="molecule type" value="mRNA"/>
</dbReference>
<dbReference type="CCDS" id="CCDS12855.1">
    <molecule id="Q8N823-1"/>
</dbReference>
<dbReference type="CCDS" id="CCDS54312.1">
    <molecule id="Q8N823-2"/>
</dbReference>
<dbReference type="RefSeq" id="NP_001154971.1">
    <molecule id="Q8N823-1"/>
    <property type="nucleotide sequence ID" value="NM_001161499.2"/>
</dbReference>
<dbReference type="RefSeq" id="NP_001154972.1">
    <molecule id="Q8N823-1"/>
    <property type="nucleotide sequence ID" value="NM_001161500.2"/>
</dbReference>
<dbReference type="RefSeq" id="NP_001154973.1">
    <molecule id="Q8N823-2"/>
    <property type="nucleotide sequence ID" value="NM_001161501.1"/>
</dbReference>
<dbReference type="RefSeq" id="NP_112234.3">
    <molecule id="Q8N823-1"/>
    <property type="nucleotide sequence ID" value="NM_030972.3"/>
</dbReference>
<dbReference type="SMR" id="Q8N823"/>
<dbReference type="BioGRID" id="123606">
    <property type="interactions" value="11"/>
</dbReference>
<dbReference type="FunCoup" id="Q8N823">
    <property type="interactions" value="87"/>
</dbReference>
<dbReference type="IntAct" id="Q8N823">
    <property type="interactions" value="14"/>
</dbReference>
<dbReference type="STRING" id="9606.ENSP00000437616"/>
<dbReference type="GlyGen" id="Q8N823">
    <property type="glycosylation" value="1 site, 1 N-linked glycan (1 site)"/>
</dbReference>
<dbReference type="iPTMnet" id="Q8N823"/>
<dbReference type="PhosphoSitePlus" id="Q8N823"/>
<dbReference type="BioMuta" id="ZNF611"/>
<dbReference type="DMDM" id="269849530"/>
<dbReference type="jPOST" id="Q8N823"/>
<dbReference type="MassIVE" id="Q8N823"/>
<dbReference type="PaxDb" id="9606-ENSP00000437616"/>
<dbReference type="PeptideAtlas" id="Q8N823"/>
<dbReference type="ProteomicsDB" id="72367">
    <molecule id="Q8N823-1"/>
</dbReference>
<dbReference type="ProteomicsDB" id="72368">
    <molecule id="Q8N823-2"/>
</dbReference>
<dbReference type="Pumba" id="Q8N823"/>
<dbReference type="Antibodypedia" id="32616">
    <property type="antibodies" value="71 antibodies from 17 providers"/>
</dbReference>
<dbReference type="DNASU" id="81856"/>
<dbReference type="Ensembl" id="ENST00000319783.5">
    <molecule id="Q8N823-1"/>
    <property type="protein sequence ID" value="ENSP00000322427.1"/>
    <property type="gene ID" value="ENSG00000213020.10"/>
</dbReference>
<dbReference type="Ensembl" id="ENST00000453741.6">
    <molecule id="Q8N823-2"/>
    <property type="protein sequence ID" value="ENSP00000443505.1"/>
    <property type="gene ID" value="ENSG00000213020.10"/>
</dbReference>
<dbReference type="Ensembl" id="ENST00000540744.5">
    <molecule id="Q8N823-1"/>
    <property type="protein sequence ID" value="ENSP00000439211.1"/>
    <property type="gene ID" value="ENSG00000213020.10"/>
</dbReference>
<dbReference type="Ensembl" id="ENST00000543227.5">
    <molecule id="Q8N823-1"/>
    <property type="protein sequence ID" value="ENSP00000437616.1"/>
    <property type="gene ID" value="ENSG00000213020.10"/>
</dbReference>
<dbReference type="Ensembl" id="ENST00000595798.5">
    <molecule id="Q8N823-2"/>
    <property type="protein sequence ID" value="ENSP00000469376.1"/>
    <property type="gene ID" value="ENSG00000213020.10"/>
</dbReference>
<dbReference type="Ensembl" id="ENST00000602162.5">
    <molecule id="Q8N823-2"/>
    <property type="protein sequence ID" value="ENSP00000472648.1"/>
    <property type="gene ID" value="ENSG00000213020.10"/>
</dbReference>
<dbReference type="Ensembl" id="ENST00000652185.1">
    <molecule id="Q8N823-1"/>
    <property type="protein sequence ID" value="ENSP00000498713.1"/>
    <property type="gene ID" value="ENSG00000213020.10"/>
</dbReference>
<dbReference type="GeneID" id="81856"/>
<dbReference type="KEGG" id="hsa:81856"/>
<dbReference type="MANE-Select" id="ENST00000652185.1">
    <property type="protein sequence ID" value="ENSP00000498713.1"/>
    <property type="RefSeq nucleotide sequence ID" value="NM_001161499.2"/>
    <property type="RefSeq protein sequence ID" value="NP_001154971.1"/>
</dbReference>
<dbReference type="UCSC" id="uc002pzz.4">
    <molecule id="Q8N823-1"/>
    <property type="organism name" value="human"/>
</dbReference>
<dbReference type="AGR" id="HGNC:28766"/>
<dbReference type="CTD" id="81856"/>
<dbReference type="DisGeNET" id="81856"/>
<dbReference type="GeneCards" id="ZNF611"/>
<dbReference type="HGNC" id="HGNC:28766">
    <property type="gene designation" value="ZNF611"/>
</dbReference>
<dbReference type="HPA" id="ENSG00000213020">
    <property type="expression patterns" value="Low tissue specificity"/>
</dbReference>
<dbReference type="neXtProt" id="NX_Q8N823"/>
<dbReference type="OpenTargets" id="ENSG00000213020"/>
<dbReference type="PharmGKB" id="PA134988282"/>
<dbReference type="VEuPathDB" id="HostDB:ENSG00000213020"/>
<dbReference type="eggNOG" id="KOG1721">
    <property type="taxonomic scope" value="Eukaryota"/>
</dbReference>
<dbReference type="GeneTree" id="ENSGT00940000164431"/>
<dbReference type="HOGENOM" id="CLU_002678_44_5_1"/>
<dbReference type="InParanoid" id="Q8N823"/>
<dbReference type="OMA" id="LPQLHIF"/>
<dbReference type="OrthoDB" id="8922241at2759"/>
<dbReference type="PAN-GO" id="Q8N823">
    <property type="GO annotations" value="4 GO annotations based on evolutionary models"/>
</dbReference>
<dbReference type="PhylomeDB" id="Q8N823"/>
<dbReference type="TreeFam" id="TF341892"/>
<dbReference type="PathwayCommons" id="Q8N823"/>
<dbReference type="Reactome" id="R-HSA-212436">
    <property type="pathway name" value="Generic Transcription Pathway"/>
</dbReference>
<dbReference type="SignaLink" id="Q8N823"/>
<dbReference type="BioGRID-ORCS" id="81856">
    <property type="hits" value="5 hits in 1082 CRISPR screens"/>
</dbReference>
<dbReference type="ChiTaRS" id="ZNF611">
    <property type="organism name" value="human"/>
</dbReference>
<dbReference type="GenomeRNAi" id="81856"/>
<dbReference type="Pharos" id="Q8N823">
    <property type="development level" value="Tdark"/>
</dbReference>
<dbReference type="PRO" id="PR:Q8N823"/>
<dbReference type="Proteomes" id="UP000005640">
    <property type="component" value="Chromosome 19"/>
</dbReference>
<dbReference type="RNAct" id="Q8N823">
    <property type="molecule type" value="protein"/>
</dbReference>
<dbReference type="Bgee" id="ENSG00000213020">
    <property type="expression patterns" value="Expressed in buccal mucosa cell and 206 other cell types or tissues"/>
</dbReference>
<dbReference type="ExpressionAtlas" id="Q8N823">
    <property type="expression patterns" value="baseline and differential"/>
</dbReference>
<dbReference type="GO" id="GO:0005634">
    <property type="term" value="C:nucleus"/>
    <property type="evidence" value="ECO:0000318"/>
    <property type="project" value="GO_Central"/>
</dbReference>
<dbReference type="GO" id="GO:0000981">
    <property type="term" value="F:DNA-binding transcription factor activity, RNA polymerase II-specific"/>
    <property type="evidence" value="ECO:0000318"/>
    <property type="project" value="GO_Central"/>
</dbReference>
<dbReference type="GO" id="GO:0000978">
    <property type="term" value="F:RNA polymerase II cis-regulatory region sequence-specific DNA binding"/>
    <property type="evidence" value="ECO:0000318"/>
    <property type="project" value="GO_Central"/>
</dbReference>
<dbReference type="GO" id="GO:0008270">
    <property type="term" value="F:zinc ion binding"/>
    <property type="evidence" value="ECO:0007669"/>
    <property type="project" value="UniProtKB-KW"/>
</dbReference>
<dbReference type="GO" id="GO:0006357">
    <property type="term" value="P:regulation of transcription by RNA polymerase II"/>
    <property type="evidence" value="ECO:0000318"/>
    <property type="project" value="GO_Central"/>
</dbReference>
<dbReference type="CDD" id="cd07765">
    <property type="entry name" value="KRAB_A-box"/>
    <property type="match status" value="1"/>
</dbReference>
<dbReference type="FunFam" id="3.30.160.60:FF:001732">
    <property type="entry name" value="Zgc:162936"/>
    <property type="match status" value="1"/>
</dbReference>
<dbReference type="FunFam" id="3.30.160.60:FF:000992">
    <property type="entry name" value="Zinc finger protein 320"/>
    <property type="match status" value="4"/>
</dbReference>
<dbReference type="FunFam" id="3.30.160.60:FF:002343">
    <property type="entry name" value="Zinc finger protein 33A"/>
    <property type="match status" value="1"/>
</dbReference>
<dbReference type="FunFam" id="3.30.160.60:FF:000016">
    <property type="entry name" value="zinc finger protein 37 homolog"/>
    <property type="match status" value="1"/>
</dbReference>
<dbReference type="FunFam" id="3.30.160.60:FF:000149">
    <property type="entry name" value="Zinc finger protein 569"/>
    <property type="match status" value="1"/>
</dbReference>
<dbReference type="FunFam" id="3.30.160.60:FF:002462">
    <property type="entry name" value="Zinc finger protein 611"/>
    <property type="match status" value="1"/>
</dbReference>
<dbReference type="FunFam" id="3.30.160.60:FF:000011">
    <property type="entry name" value="zinc finger protein 615 isoform X1"/>
    <property type="match status" value="1"/>
</dbReference>
<dbReference type="FunFam" id="3.30.160.60:FF:001090">
    <property type="entry name" value="zinc finger protein 629 isoform X2"/>
    <property type="match status" value="1"/>
</dbReference>
<dbReference type="FunFam" id="3.30.160.60:FF:000188">
    <property type="entry name" value="Zinc finger protein 787"/>
    <property type="match status" value="3"/>
</dbReference>
<dbReference type="FunFam" id="3.30.160.60:FF:002289">
    <property type="entry name" value="Zinc finger protein 813"/>
    <property type="match status" value="1"/>
</dbReference>
<dbReference type="FunFam" id="3.30.160.60:FF:000307">
    <property type="entry name" value="Zinc finger protein ZFP69 isoform 1"/>
    <property type="match status" value="2"/>
</dbReference>
<dbReference type="Gene3D" id="6.10.140.140">
    <property type="match status" value="1"/>
</dbReference>
<dbReference type="Gene3D" id="3.30.160.60">
    <property type="entry name" value="Classic Zinc Finger"/>
    <property type="match status" value="17"/>
</dbReference>
<dbReference type="InterPro" id="IPR001909">
    <property type="entry name" value="KRAB"/>
</dbReference>
<dbReference type="InterPro" id="IPR036051">
    <property type="entry name" value="KRAB_dom_sf"/>
</dbReference>
<dbReference type="InterPro" id="IPR050758">
    <property type="entry name" value="Znf_C2H2-type"/>
</dbReference>
<dbReference type="InterPro" id="IPR036236">
    <property type="entry name" value="Znf_C2H2_sf"/>
</dbReference>
<dbReference type="InterPro" id="IPR013087">
    <property type="entry name" value="Znf_C2H2_type"/>
</dbReference>
<dbReference type="PANTHER" id="PTHR23234:SF10">
    <property type="entry name" value="RIKEN CDNA 6720489N17 GENE-RELATED"/>
    <property type="match status" value="1"/>
</dbReference>
<dbReference type="PANTHER" id="PTHR23234">
    <property type="entry name" value="ZNF44 PROTEIN"/>
    <property type="match status" value="1"/>
</dbReference>
<dbReference type="Pfam" id="PF01352">
    <property type="entry name" value="KRAB"/>
    <property type="match status" value="1"/>
</dbReference>
<dbReference type="Pfam" id="PF00096">
    <property type="entry name" value="zf-C2H2"/>
    <property type="match status" value="11"/>
</dbReference>
<dbReference type="SMART" id="SM00349">
    <property type="entry name" value="KRAB"/>
    <property type="match status" value="1"/>
</dbReference>
<dbReference type="SMART" id="SM00355">
    <property type="entry name" value="ZnF_C2H2"/>
    <property type="match status" value="15"/>
</dbReference>
<dbReference type="SUPFAM" id="SSF57667">
    <property type="entry name" value="beta-beta-alpha zinc fingers"/>
    <property type="match status" value="9"/>
</dbReference>
<dbReference type="SUPFAM" id="SSF109640">
    <property type="entry name" value="KRAB domain (Kruppel-associated box)"/>
    <property type="match status" value="1"/>
</dbReference>
<dbReference type="PROSITE" id="PS50805">
    <property type="entry name" value="KRAB"/>
    <property type="match status" value="1"/>
</dbReference>
<dbReference type="PROSITE" id="PS00028">
    <property type="entry name" value="ZINC_FINGER_C2H2_1"/>
    <property type="match status" value="13"/>
</dbReference>
<dbReference type="PROSITE" id="PS50157">
    <property type="entry name" value="ZINC_FINGER_C2H2_2"/>
    <property type="match status" value="17"/>
</dbReference>
<feature type="chain" id="PRO_0000234596" description="Zinc finger protein 611">
    <location>
        <begin position="1"/>
        <end position="705"/>
    </location>
</feature>
<feature type="domain" description="KRAB" evidence="2">
    <location>
        <begin position="24"/>
        <end position="97"/>
    </location>
</feature>
<feature type="zinc finger region" description="C2H2-type 1; degenerate" evidence="1">
    <location>
        <begin position="231"/>
        <end position="253"/>
    </location>
</feature>
<feature type="zinc finger region" description="C2H2-type 2" evidence="1">
    <location>
        <begin position="259"/>
        <end position="281"/>
    </location>
</feature>
<feature type="zinc finger region" description="C2H2-type 3" evidence="1">
    <location>
        <begin position="287"/>
        <end position="309"/>
    </location>
</feature>
<feature type="zinc finger region" description="C2H2-type 4; degenerate" evidence="1">
    <location>
        <begin position="315"/>
        <end position="337"/>
    </location>
</feature>
<feature type="zinc finger region" description="C2H2-type 5" evidence="1">
    <location>
        <begin position="343"/>
        <end position="364"/>
    </location>
</feature>
<feature type="zinc finger region" description="C2H2-type 6" evidence="1">
    <location>
        <begin position="370"/>
        <end position="392"/>
    </location>
</feature>
<feature type="zinc finger region" description="C2H2-type 7" evidence="1">
    <location>
        <begin position="398"/>
        <end position="420"/>
    </location>
</feature>
<feature type="zinc finger region" description="C2H2-type 8" evidence="1">
    <location>
        <begin position="426"/>
        <end position="448"/>
    </location>
</feature>
<feature type="zinc finger region" description="C2H2-type 9; degenerate" evidence="1">
    <location>
        <begin position="454"/>
        <end position="476"/>
    </location>
</feature>
<feature type="zinc finger region" description="C2H2-type 10" evidence="1">
    <location>
        <begin position="482"/>
        <end position="504"/>
    </location>
</feature>
<feature type="zinc finger region" description="C2H2-type 11" evidence="1">
    <location>
        <begin position="510"/>
        <end position="532"/>
    </location>
</feature>
<feature type="zinc finger region" description="C2H2-type 12" evidence="1">
    <location>
        <begin position="538"/>
        <end position="560"/>
    </location>
</feature>
<feature type="zinc finger region" description="C2H2-type 13" evidence="1">
    <location>
        <begin position="566"/>
        <end position="588"/>
    </location>
</feature>
<feature type="zinc finger region" description="C2H2-type 14" evidence="1">
    <location>
        <begin position="594"/>
        <end position="616"/>
    </location>
</feature>
<feature type="zinc finger region" description="C2H2-type 15" evidence="1">
    <location>
        <begin position="622"/>
        <end position="644"/>
    </location>
</feature>
<feature type="zinc finger region" description="C2H2-type 16" evidence="1">
    <location>
        <begin position="650"/>
        <end position="672"/>
    </location>
</feature>
<feature type="zinc finger region" description="C2H2-type 17" evidence="1">
    <location>
        <begin position="678"/>
        <end position="700"/>
    </location>
</feature>
<feature type="cross-link" description="Glycyl lysine isopeptide (Lys-Gly) (interchain with G-Cter in SUMO2)" evidence="8">
    <location>
        <position position="173"/>
    </location>
</feature>
<feature type="cross-link" description="Glycyl lysine isopeptide (Lys-Gly) (interchain with G-Cter in SUMO2)" evidence="8">
    <location>
        <position position="221"/>
    </location>
</feature>
<feature type="splice variant" id="VSP_038425" description="In isoform 2." evidence="5 6">
    <location>
        <begin position="1"/>
        <end position="69"/>
    </location>
</feature>
<feature type="sequence variant" id="VAR_060429" description="In dbSNP:rs3884051.">
    <original>N</original>
    <variation>I</variation>
    <location>
        <position position="234"/>
    </location>
</feature>
<feature type="sequence variant" id="VAR_060722" description="Requires 2 nucleotide substitutions; dbSNP:rs34846371." evidence="3 4">
    <original>P</original>
    <variation>I</variation>
    <location>
        <position position="252"/>
    </location>
</feature>
<feature type="sequence variant" id="VAR_052876" description="In dbSNP:rs4085566.">
    <original>P</original>
    <variation>L</variation>
    <location>
        <position position="252"/>
    </location>
</feature>
<feature type="sequence variant" id="VAR_059927" description="In dbSNP:rs4085565.">
    <original>P</original>
    <variation>T</variation>
    <location>
        <position position="252"/>
    </location>
</feature>
<feature type="sequence variant" id="VAR_052877" description="In dbSNP:rs4087790.">
    <original>E</original>
    <variation>G</variation>
    <location>
        <position position="340"/>
    </location>
</feature>
<feature type="sequence conflict" description="In Ref. 1; BAC05052." evidence="7" ref="1">
    <original>N</original>
    <variation>D</variation>
    <location>
        <position position="123"/>
    </location>
</feature>
<feature type="sequence conflict" description="In Ref. 1; BAC05052." evidence="7" ref="1">
    <original>F</original>
    <variation>S</variation>
    <location>
        <position position="379"/>
    </location>
</feature>